<dbReference type="EC" id="1.-.-.-" evidence="3"/>
<dbReference type="EMBL" id="MK425157">
    <property type="protein sequence ID" value="QBE85642.1"/>
    <property type="molecule type" value="Genomic_DNA"/>
</dbReference>
<dbReference type="SMR" id="A0A411KZZ8"/>
<dbReference type="GO" id="GO:0000166">
    <property type="term" value="F:nucleotide binding"/>
    <property type="evidence" value="ECO:0007669"/>
    <property type="project" value="UniProtKB-KW"/>
</dbReference>
<dbReference type="GO" id="GO:0016651">
    <property type="term" value="F:oxidoreductase activity, acting on NAD(P)H"/>
    <property type="evidence" value="ECO:0007669"/>
    <property type="project" value="InterPro"/>
</dbReference>
<dbReference type="GO" id="GO:0017000">
    <property type="term" value="P:antibiotic biosynthetic process"/>
    <property type="evidence" value="ECO:0007669"/>
    <property type="project" value="UniProtKB-KW"/>
</dbReference>
<dbReference type="CDD" id="cd08249">
    <property type="entry name" value="enoyl_reductase_like"/>
    <property type="match status" value="1"/>
</dbReference>
<dbReference type="Gene3D" id="3.90.180.10">
    <property type="entry name" value="Medium-chain alcohol dehydrogenases, catalytic domain"/>
    <property type="match status" value="1"/>
</dbReference>
<dbReference type="Gene3D" id="3.40.50.720">
    <property type="entry name" value="NAD(P)-binding Rossmann-like Domain"/>
    <property type="match status" value="1"/>
</dbReference>
<dbReference type="InterPro" id="IPR013149">
    <property type="entry name" value="ADH-like_C"/>
</dbReference>
<dbReference type="InterPro" id="IPR013154">
    <property type="entry name" value="ADH-like_N"/>
</dbReference>
<dbReference type="InterPro" id="IPR011032">
    <property type="entry name" value="GroES-like_sf"/>
</dbReference>
<dbReference type="InterPro" id="IPR036291">
    <property type="entry name" value="NAD(P)-bd_dom_sf"/>
</dbReference>
<dbReference type="InterPro" id="IPR020843">
    <property type="entry name" value="PKS_ER"/>
</dbReference>
<dbReference type="InterPro" id="IPR047122">
    <property type="entry name" value="Trans-enoyl_RdTase-like"/>
</dbReference>
<dbReference type="PANTHER" id="PTHR45348">
    <property type="entry name" value="HYPOTHETICAL OXIDOREDUCTASE (EUROFUNG)"/>
    <property type="match status" value="1"/>
</dbReference>
<dbReference type="PANTHER" id="PTHR45348:SF2">
    <property type="entry name" value="ZINC-TYPE ALCOHOL DEHYDROGENASE-LIKE PROTEIN C2E1P3.01"/>
    <property type="match status" value="1"/>
</dbReference>
<dbReference type="Pfam" id="PF08240">
    <property type="entry name" value="ADH_N"/>
    <property type="match status" value="1"/>
</dbReference>
<dbReference type="Pfam" id="PF00107">
    <property type="entry name" value="ADH_zinc_N"/>
    <property type="match status" value="1"/>
</dbReference>
<dbReference type="SMART" id="SM00829">
    <property type="entry name" value="PKS_ER"/>
    <property type="match status" value="1"/>
</dbReference>
<dbReference type="SUPFAM" id="SSF50129">
    <property type="entry name" value="GroES-like"/>
    <property type="match status" value="1"/>
</dbReference>
<dbReference type="SUPFAM" id="SSF51735">
    <property type="entry name" value="NAD(P)-binding Rossmann-fold domains"/>
    <property type="match status" value="1"/>
</dbReference>
<keyword id="KW-0045">Antibiotic biosynthesis</keyword>
<keyword id="KW-0521">NADP</keyword>
<keyword id="KW-0547">Nucleotide-binding</keyword>
<keyword id="KW-0560">Oxidoreductase</keyword>
<name>BUAC_PETAA</name>
<gene>
    <name evidence="4" type="primary">buaC</name>
</gene>
<feature type="chain" id="PRO_0000448731" description="Trans-enoyl reductase buaC">
    <location>
        <begin position="1"/>
        <end position="357"/>
    </location>
</feature>
<feature type="binding site" evidence="1">
    <location>
        <begin position="50"/>
        <end position="53"/>
    </location>
    <ligand>
        <name>NADP(+)</name>
        <dbReference type="ChEBI" id="CHEBI:58349"/>
    </ligand>
</feature>
<feature type="binding site" evidence="2">
    <location>
        <begin position="135"/>
        <end position="142"/>
    </location>
    <ligand>
        <name>substrate</name>
    </ligand>
</feature>
<feature type="binding site" evidence="1">
    <location>
        <begin position="170"/>
        <end position="173"/>
    </location>
    <ligand>
        <name>NADP(+)</name>
        <dbReference type="ChEBI" id="CHEBI:58349"/>
    </ligand>
</feature>
<feature type="binding site" evidence="1">
    <location>
        <begin position="193"/>
        <end position="196"/>
    </location>
    <ligand>
        <name>NADP(+)</name>
        <dbReference type="ChEBI" id="CHEBI:58349"/>
    </ligand>
</feature>
<feature type="binding site" evidence="1">
    <location>
        <position position="211"/>
    </location>
    <ligand>
        <name>NADP(+)</name>
        <dbReference type="ChEBI" id="CHEBI:58349"/>
    </ligand>
</feature>
<feature type="binding site" evidence="1">
    <location>
        <begin position="258"/>
        <end position="259"/>
    </location>
    <ligand>
        <name>NADP(+)</name>
        <dbReference type="ChEBI" id="CHEBI:58349"/>
    </ligand>
</feature>
<feature type="binding site" evidence="2">
    <location>
        <begin position="278"/>
        <end position="282"/>
    </location>
    <ligand>
        <name>substrate</name>
    </ligand>
</feature>
<feature type="binding site" evidence="1">
    <location>
        <begin position="347"/>
        <end position="348"/>
    </location>
    <ligand>
        <name>NADP(+)</name>
        <dbReference type="ChEBI" id="CHEBI:58349"/>
    </ligand>
</feature>
<reference key="1">
    <citation type="journal article" date="2019" name="Org. Lett.">
        <title>Discovery and Heterologous Biosynthesis of the Burnettramic Acids: Rare PKS-NRPS-Derived Bolaamphiphilic Pyrrolizidinediones from an Australian Fungus, Aspergillus burnettii.</title>
        <authorList>
            <person name="Li H."/>
            <person name="Gilchrist C.L.M."/>
            <person name="Lacey H.J."/>
            <person name="Crombie A."/>
            <person name="Vuong D."/>
            <person name="Pitt J.I."/>
            <person name="Lacey E."/>
            <person name="Chooi Y.H."/>
            <person name="Piggott A.M."/>
        </authorList>
    </citation>
    <scope>NUCLEOTIDE SEQUENCE [GENOMIC DNA]</scope>
    <scope>FUNCTION</scope>
    <scope>PATHWAY</scope>
    <source>
        <strain>FRR 5400</strain>
    </source>
</reference>
<organism>
    <name type="scientific">Petromyces alliaceus</name>
    <name type="common">Aspergillus alliaceus</name>
    <dbReference type="NCBI Taxonomy" id="209559"/>
    <lineage>
        <taxon>Eukaryota</taxon>
        <taxon>Fungi</taxon>
        <taxon>Dikarya</taxon>
        <taxon>Ascomycota</taxon>
        <taxon>Pezizomycotina</taxon>
        <taxon>Eurotiomycetes</taxon>
        <taxon>Eurotiomycetidae</taxon>
        <taxon>Eurotiales</taxon>
        <taxon>Aspergillaceae</taxon>
        <taxon>Aspergillus</taxon>
        <taxon>Aspergillus subgen. Circumdati</taxon>
    </lineage>
</organism>
<accession>A0A411KZZ8</accession>
<proteinExistence type="inferred from homology"/>
<protein>
    <recommendedName>
        <fullName evidence="4">Trans-enoyl reductase buaC</fullName>
        <ecNumber evidence="3">1.-.-.-</ecNumber>
    </recommendedName>
    <alternativeName>
        <fullName evidence="4">Burnettramic acids biosynthesis cluster protein C</fullName>
    </alternativeName>
</protein>
<comment type="function">
    <text evidence="3">Trans-enoyl reductase; part of the gene cluster that mediates the biosynthesis of burnettramic acids, an unusual class of bolaamphiphilic pyrrolizidinediones that display potent antibacterial, antifungal, and cytotoxic activities (PubMed:30735051). The first step of the biosynthesis of burnettramic acids is the hydroxylation of proline by the proline hydroxylase buaE to generate 4-hydroxyproline (PubMed:30735051). The PKS-NRPS buaA and trans-enoyl reductase buaC construct the highly reduced polyketide chain, and the condensation (C) domain of buaA then catalyzes the amide bond formation with the activated 4-hydroxyproline (PubMed:30735051). This is followed by the R domain releasing the nascent polyketide-peptide directly via a Dieckmann condensation to afford a tetramic acid fused to the hydroxyproline, generating the bicyclic pyrrolidinedione moiety (PubMed:30735051). The cytochrome P450 monooxygenases buaD and buaG are likely responsible for the multiple hydroxylations on the polyketide chain and its terminus, although in the heterologous context, buaD does not appear to be required. Therefore, while buaG may be a multifunctional cytochrome P450 monooxygenase, it cannot be ruled out that the two secondary alcohols on the polyketide chain could have an acetate origin (PubMed:30735051). Finally, the glycosyltransferase buaB transfers beta-D-mannose to the aglycone burnettramic acid A to form burnettramic acid A (PubMed:30735051). Burnettramic acid B is a minor cis-pyrrolizidine epimer of burnettramic acid A and it is likely that small amounts of it form naturally in acidic environments (PubMed:30735051).</text>
</comment>
<comment type="pathway">
    <text evidence="3">Mycotoxin biosynthesis.</text>
</comment>
<comment type="subunit">
    <text evidence="1">Monomer.</text>
</comment>
<comment type="similarity">
    <text evidence="5">Belongs to the zinc-containing alcohol dehydrogenase family.</text>
</comment>
<evidence type="ECO:0000250" key="1">
    <source>
        <dbReference type="UniProtKB" id="Q9Y7D0"/>
    </source>
</evidence>
<evidence type="ECO:0000255" key="2"/>
<evidence type="ECO:0000269" key="3">
    <source>
    </source>
</evidence>
<evidence type="ECO:0000303" key="4">
    <source>
    </source>
</evidence>
<evidence type="ECO:0000305" key="5"/>
<sequence>MGIQHMLPSTQTAIIAGPQGEFQLSHDVPVTPLADDEIIMKTAAVALNPVDTKLVGDFITPGAIFGFDCAGVIVAVGPKVGNGLAIGDRVCGSARGMNREKPLGGAFAEYVMLPADLTLRIPPAMTFAEAASLGTALVSACMSLFWTMQIPASLQEPAEKPFPVLVYGGSTATGTMLLQVLKICGVRTLTTCSPKNFDLVRSYGADEVFDYNSPTCAQDIREATRNNLKYAVDCITEDSTIKICYSAIGRAGGQYIALNPYPEHLATRKVIKPGWILATLITGEGSAWPEPYHREPDPEIRALAKPAYSAVQKLLDEGRLRSHPIRVKDGGLAAVLDGVEVLRKGEISGQKLVYCFN</sequence>